<evidence type="ECO:0000255" key="1">
    <source>
        <dbReference type="HAMAP-Rule" id="MF_00161"/>
    </source>
</evidence>
<accession>B5R1N7</accession>
<sequence length="166" mass="18339">MSKPLCSTGLRWLWLVVVVLIIDLGSKYLILQNFALGDTVGLFPSLNLHYARNYGAAFSFLADSGGWQRWFFAGIAIGICVILLVMMYRSKATQKLNNIAYALIIGGALGNLFDRLWHGFVVDMIDFYVGNWHFATFNLADSAICIGAALIVLEGFLPKPTAKEQA</sequence>
<reference key="1">
    <citation type="journal article" date="2008" name="Genome Res.">
        <title>Comparative genome analysis of Salmonella enteritidis PT4 and Salmonella gallinarum 287/91 provides insights into evolutionary and host adaptation pathways.</title>
        <authorList>
            <person name="Thomson N.R."/>
            <person name="Clayton D.J."/>
            <person name="Windhorst D."/>
            <person name="Vernikos G."/>
            <person name="Davidson S."/>
            <person name="Churcher C."/>
            <person name="Quail M.A."/>
            <person name="Stevens M."/>
            <person name="Jones M.A."/>
            <person name="Watson M."/>
            <person name="Barron A."/>
            <person name="Layton A."/>
            <person name="Pickard D."/>
            <person name="Kingsley R.A."/>
            <person name="Bignell A."/>
            <person name="Clark L."/>
            <person name="Harris B."/>
            <person name="Ormond D."/>
            <person name="Abdellah Z."/>
            <person name="Brooks K."/>
            <person name="Cherevach I."/>
            <person name="Chillingworth T."/>
            <person name="Woodward J."/>
            <person name="Norberczak H."/>
            <person name="Lord A."/>
            <person name="Arrowsmith C."/>
            <person name="Jagels K."/>
            <person name="Moule S."/>
            <person name="Mungall K."/>
            <person name="Saunders M."/>
            <person name="Whitehead S."/>
            <person name="Chabalgoity J.A."/>
            <person name="Maskell D."/>
            <person name="Humphreys T."/>
            <person name="Roberts M."/>
            <person name="Barrow P.A."/>
            <person name="Dougan G."/>
            <person name="Parkhill J."/>
        </authorList>
    </citation>
    <scope>NUCLEOTIDE SEQUENCE [LARGE SCALE GENOMIC DNA]</scope>
    <source>
        <strain>P125109</strain>
    </source>
</reference>
<keyword id="KW-0064">Aspartyl protease</keyword>
<keyword id="KW-0997">Cell inner membrane</keyword>
<keyword id="KW-1003">Cell membrane</keyword>
<keyword id="KW-0378">Hydrolase</keyword>
<keyword id="KW-0472">Membrane</keyword>
<keyword id="KW-0645">Protease</keyword>
<keyword id="KW-0812">Transmembrane</keyword>
<keyword id="KW-1133">Transmembrane helix</keyword>
<protein>
    <recommendedName>
        <fullName evidence="1">Lipoprotein signal peptidase</fullName>
        <ecNumber evidence="1">3.4.23.36</ecNumber>
    </recommendedName>
    <alternativeName>
        <fullName evidence="1">Prolipoprotein signal peptidase</fullName>
    </alternativeName>
    <alternativeName>
        <fullName evidence="1">Signal peptidase II</fullName>
        <shortName evidence="1">SPase II</shortName>
    </alternativeName>
</protein>
<dbReference type="EC" id="3.4.23.36" evidence="1"/>
<dbReference type="EMBL" id="AM933172">
    <property type="protein sequence ID" value="CAR31638.1"/>
    <property type="molecule type" value="Genomic_DNA"/>
</dbReference>
<dbReference type="RefSeq" id="WP_000042739.1">
    <property type="nucleotide sequence ID" value="NC_011294.1"/>
</dbReference>
<dbReference type="SMR" id="B5R1N7"/>
<dbReference type="MEROPS" id="A08.001"/>
<dbReference type="KEGG" id="set:SEN0047"/>
<dbReference type="HOGENOM" id="CLU_083252_4_0_6"/>
<dbReference type="UniPathway" id="UPA00665"/>
<dbReference type="Proteomes" id="UP000000613">
    <property type="component" value="Chromosome"/>
</dbReference>
<dbReference type="GO" id="GO:0005886">
    <property type="term" value="C:plasma membrane"/>
    <property type="evidence" value="ECO:0007669"/>
    <property type="project" value="UniProtKB-SubCell"/>
</dbReference>
<dbReference type="GO" id="GO:0004190">
    <property type="term" value="F:aspartic-type endopeptidase activity"/>
    <property type="evidence" value="ECO:0007669"/>
    <property type="project" value="UniProtKB-UniRule"/>
</dbReference>
<dbReference type="GO" id="GO:0006508">
    <property type="term" value="P:proteolysis"/>
    <property type="evidence" value="ECO:0007669"/>
    <property type="project" value="UniProtKB-KW"/>
</dbReference>
<dbReference type="HAMAP" id="MF_00161">
    <property type="entry name" value="LspA"/>
    <property type="match status" value="1"/>
</dbReference>
<dbReference type="InterPro" id="IPR001872">
    <property type="entry name" value="Peptidase_A8"/>
</dbReference>
<dbReference type="NCBIfam" id="TIGR00077">
    <property type="entry name" value="lspA"/>
    <property type="match status" value="1"/>
</dbReference>
<dbReference type="PANTHER" id="PTHR33695">
    <property type="entry name" value="LIPOPROTEIN SIGNAL PEPTIDASE"/>
    <property type="match status" value="1"/>
</dbReference>
<dbReference type="PANTHER" id="PTHR33695:SF1">
    <property type="entry name" value="LIPOPROTEIN SIGNAL PEPTIDASE"/>
    <property type="match status" value="1"/>
</dbReference>
<dbReference type="Pfam" id="PF01252">
    <property type="entry name" value="Peptidase_A8"/>
    <property type="match status" value="1"/>
</dbReference>
<dbReference type="PRINTS" id="PR00781">
    <property type="entry name" value="LIPOSIGPTASE"/>
</dbReference>
<dbReference type="PROSITE" id="PS00855">
    <property type="entry name" value="SPASE_II"/>
    <property type="match status" value="1"/>
</dbReference>
<proteinExistence type="inferred from homology"/>
<gene>
    <name evidence="1" type="primary">lspA</name>
    <name type="ordered locus">SEN0047</name>
</gene>
<feature type="chain" id="PRO_1000097275" description="Lipoprotein signal peptidase">
    <location>
        <begin position="1"/>
        <end position="166"/>
    </location>
</feature>
<feature type="transmembrane region" description="Helical" evidence="1">
    <location>
        <begin position="12"/>
        <end position="32"/>
    </location>
</feature>
<feature type="transmembrane region" description="Helical" evidence="1">
    <location>
        <begin position="70"/>
        <end position="90"/>
    </location>
</feature>
<feature type="transmembrane region" description="Helical" evidence="1">
    <location>
        <begin position="102"/>
        <end position="122"/>
    </location>
</feature>
<feature type="transmembrane region" description="Helical" evidence="1">
    <location>
        <begin position="137"/>
        <end position="157"/>
    </location>
</feature>
<feature type="active site" evidence="1">
    <location>
        <position position="123"/>
    </location>
</feature>
<feature type="active site" evidence="1">
    <location>
        <position position="141"/>
    </location>
</feature>
<organism>
    <name type="scientific">Salmonella enteritidis PT4 (strain P125109)</name>
    <dbReference type="NCBI Taxonomy" id="550537"/>
    <lineage>
        <taxon>Bacteria</taxon>
        <taxon>Pseudomonadati</taxon>
        <taxon>Pseudomonadota</taxon>
        <taxon>Gammaproteobacteria</taxon>
        <taxon>Enterobacterales</taxon>
        <taxon>Enterobacteriaceae</taxon>
        <taxon>Salmonella</taxon>
    </lineage>
</organism>
<comment type="function">
    <text evidence="1">This protein specifically catalyzes the removal of signal peptides from prolipoproteins.</text>
</comment>
<comment type="catalytic activity">
    <reaction evidence="1">
        <text>Release of signal peptides from bacterial membrane prolipoproteins. Hydrolyzes -Xaa-Yaa-Zaa-|-(S,diacylglyceryl)Cys-, in which Xaa is hydrophobic (preferably Leu), and Yaa (Ala or Ser) and Zaa (Gly or Ala) have small, neutral side chains.</text>
        <dbReference type="EC" id="3.4.23.36"/>
    </reaction>
</comment>
<comment type="pathway">
    <text evidence="1">Protein modification; lipoprotein biosynthesis (signal peptide cleavage).</text>
</comment>
<comment type="subcellular location">
    <subcellularLocation>
        <location evidence="1">Cell inner membrane</location>
        <topology evidence="1">Multi-pass membrane protein</topology>
    </subcellularLocation>
</comment>
<comment type="similarity">
    <text evidence="1">Belongs to the peptidase A8 family.</text>
</comment>
<name>LSPA_SALEP</name>